<sequence length="344" mass="37360">MSNAITMGIFWHLIGAASAACFYAPFKQVKQWSWETMWSVGGIVSWLILPWAISALLLPDFWAYYGQFNLSTLLPVFLFGAMWGIGNINYGLTMRYLGMSMGIGIAIGITLIVGTLMTPIINGNFDVLIHTEGGRMTLLGVFVALIGVGIVTRAGQLKERKMGIKAEEFNLKKGLLLAVMCGIFSAGMSFAMNAAKPMHEAAAALGVDPLYVALPSYVVIMGGGALVNLGFCFIRLAKVQNLSIKADFSLARPLIISNILLSALGGLMWYLQFFFYAWGHARIPAQYDYMSWMLHMSFYVLCGGLVGLVLKEWKNAGRRPVAVLSLGCVVIIIAANIVGLGMAS</sequence>
<feature type="chain" id="PRO_1000146496" description="L-rhamnose-proton symporter">
    <location>
        <begin position="1"/>
        <end position="344"/>
    </location>
</feature>
<feature type="transmembrane region" description="Helical" evidence="1">
    <location>
        <begin position="4"/>
        <end position="24"/>
    </location>
</feature>
<feature type="transmembrane region" description="Helical" evidence="1">
    <location>
        <begin position="38"/>
        <end position="58"/>
    </location>
</feature>
<feature type="transmembrane region" description="Helical" evidence="1">
    <location>
        <begin position="68"/>
        <end position="88"/>
    </location>
</feature>
<feature type="transmembrane region" description="Helical" evidence="1">
    <location>
        <begin position="101"/>
        <end position="121"/>
    </location>
</feature>
<feature type="transmembrane region" description="Helical" evidence="1">
    <location>
        <begin position="137"/>
        <end position="157"/>
    </location>
</feature>
<feature type="transmembrane region" description="Helical" evidence="1">
    <location>
        <begin position="175"/>
        <end position="195"/>
    </location>
</feature>
<feature type="transmembrane region" description="Helical" evidence="1">
    <location>
        <begin position="214"/>
        <end position="234"/>
    </location>
</feature>
<feature type="transmembrane region" description="Helical" evidence="1">
    <location>
        <begin position="259"/>
        <end position="279"/>
    </location>
</feature>
<feature type="transmembrane region" description="Helical" evidence="1">
    <location>
        <begin position="290"/>
        <end position="310"/>
    </location>
</feature>
<feature type="transmembrane region" description="Helical" evidence="1">
    <location>
        <begin position="321"/>
        <end position="341"/>
    </location>
</feature>
<proteinExistence type="inferred from homology"/>
<name>RHAT_SALEP</name>
<dbReference type="EMBL" id="AM933172">
    <property type="protein sequence ID" value="CAR35414.1"/>
    <property type="molecule type" value="Genomic_DNA"/>
</dbReference>
<dbReference type="RefSeq" id="WP_000063533.1">
    <property type="nucleotide sequence ID" value="NC_011294.1"/>
</dbReference>
<dbReference type="KEGG" id="set:SEN3841"/>
<dbReference type="HOGENOM" id="CLU_066437_0_0_6"/>
<dbReference type="Proteomes" id="UP000000613">
    <property type="component" value="Chromosome"/>
</dbReference>
<dbReference type="GO" id="GO:0005886">
    <property type="term" value="C:plasma membrane"/>
    <property type="evidence" value="ECO:0007669"/>
    <property type="project" value="UniProtKB-SubCell"/>
</dbReference>
<dbReference type="GO" id="GO:0015153">
    <property type="term" value="F:rhamnose transmembrane transporter activity"/>
    <property type="evidence" value="ECO:0007669"/>
    <property type="project" value="UniProtKB-UniRule"/>
</dbReference>
<dbReference type="GO" id="GO:0015293">
    <property type="term" value="F:symporter activity"/>
    <property type="evidence" value="ECO:0007669"/>
    <property type="project" value="UniProtKB-KW"/>
</dbReference>
<dbReference type="HAMAP" id="MF_01532">
    <property type="entry name" value="RhaT"/>
    <property type="match status" value="1"/>
</dbReference>
<dbReference type="InterPro" id="IPR004673">
    <property type="entry name" value="L-rhamnose-proton_sym_RhaT"/>
</dbReference>
<dbReference type="NCBIfam" id="NF010021">
    <property type="entry name" value="PRK13499.1-1"/>
    <property type="match status" value="1"/>
</dbReference>
<dbReference type="NCBIfam" id="NF010023">
    <property type="entry name" value="PRK13499.1-3"/>
    <property type="match status" value="1"/>
</dbReference>
<dbReference type="NCBIfam" id="TIGR00776">
    <property type="entry name" value="RhaT"/>
    <property type="match status" value="1"/>
</dbReference>
<dbReference type="Pfam" id="PF06379">
    <property type="entry name" value="RhaT"/>
    <property type="match status" value="1"/>
</dbReference>
<evidence type="ECO:0000255" key="1">
    <source>
        <dbReference type="HAMAP-Rule" id="MF_01532"/>
    </source>
</evidence>
<protein>
    <recommendedName>
        <fullName evidence="1">L-rhamnose-proton symporter</fullName>
    </recommendedName>
    <alternativeName>
        <fullName evidence="1">L-rhamnose-H(+) transport protein</fullName>
    </alternativeName>
</protein>
<gene>
    <name evidence="1" type="primary">rhaT</name>
    <name type="ordered locus">SEN3841</name>
</gene>
<accession>B5QWY6</accession>
<organism>
    <name type="scientific">Salmonella enteritidis PT4 (strain P125109)</name>
    <dbReference type="NCBI Taxonomy" id="550537"/>
    <lineage>
        <taxon>Bacteria</taxon>
        <taxon>Pseudomonadati</taxon>
        <taxon>Pseudomonadota</taxon>
        <taxon>Gammaproteobacteria</taxon>
        <taxon>Enterobacterales</taxon>
        <taxon>Enterobacteriaceae</taxon>
        <taxon>Salmonella</taxon>
    </lineage>
</organism>
<comment type="function">
    <text evidence="1">Uptake of L-rhamnose across the cytoplasmic membrane with the concomitant transport of protons into the cell (symport system).</text>
</comment>
<comment type="catalytic activity">
    <reaction evidence="1">
        <text>L-rhamnopyranose(in) + H(+)(in) = L-rhamnopyranose(out) + H(+)(out)</text>
        <dbReference type="Rhea" id="RHEA:29947"/>
        <dbReference type="ChEBI" id="CHEBI:15378"/>
        <dbReference type="ChEBI" id="CHEBI:62346"/>
    </reaction>
    <physiologicalReaction direction="right-to-left" evidence="1">
        <dbReference type="Rhea" id="RHEA:29949"/>
    </physiologicalReaction>
</comment>
<comment type="subcellular location">
    <subcellularLocation>
        <location evidence="1">Cell inner membrane</location>
        <topology evidence="1">Multi-pass membrane protein</topology>
    </subcellularLocation>
</comment>
<comment type="similarity">
    <text evidence="1">Belongs to the L-rhamnose transporter (TC 2.A.7.6) family.</text>
</comment>
<reference key="1">
    <citation type="journal article" date="2008" name="Genome Res.">
        <title>Comparative genome analysis of Salmonella enteritidis PT4 and Salmonella gallinarum 287/91 provides insights into evolutionary and host adaptation pathways.</title>
        <authorList>
            <person name="Thomson N.R."/>
            <person name="Clayton D.J."/>
            <person name="Windhorst D."/>
            <person name="Vernikos G."/>
            <person name="Davidson S."/>
            <person name="Churcher C."/>
            <person name="Quail M.A."/>
            <person name="Stevens M."/>
            <person name="Jones M.A."/>
            <person name="Watson M."/>
            <person name="Barron A."/>
            <person name="Layton A."/>
            <person name="Pickard D."/>
            <person name="Kingsley R.A."/>
            <person name="Bignell A."/>
            <person name="Clark L."/>
            <person name="Harris B."/>
            <person name="Ormond D."/>
            <person name="Abdellah Z."/>
            <person name="Brooks K."/>
            <person name="Cherevach I."/>
            <person name="Chillingworth T."/>
            <person name="Woodward J."/>
            <person name="Norberczak H."/>
            <person name="Lord A."/>
            <person name="Arrowsmith C."/>
            <person name="Jagels K."/>
            <person name="Moule S."/>
            <person name="Mungall K."/>
            <person name="Saunders M."/>
            <person name="Whitehead S."/>
            <person name="Chabalgoity J.A."/>
            <person name="Maskell D."/>
            <person name="Humphreys T."/>
            <person name="Roberts M."/>
            <person name="Barrow P.A."/>
            <person name="Dougan G."/>
            <person name="Parkhill J."/>
        </authorList>
    </citation>
    <scope>NUCLEOTIDE SEQUENCE [LARGE SCALE GENOMIC DNA]</scope>
    <source>
        <strain>P125109</strain>
    </source>
</reference>
<keyword id="KW-0997">Cell inner membrane</keyword>
<keyword id="KW-1003">Cell membrane</keyword>
<keyword id="KW-0472">Membrane</keyword>
<keyword id="KW-0762">Sugar transport</keyword>
<keyword id="KW-0769">Symport</keyword>
<keyword id="KW-0812">Transmembrane</keyword>
<keyword id="KW-1133">Transmembrane helix</keyword>
<keyword id="KW-0813">Transport</keyword>